<accession>P17908</accession>
<geneLocation type="plasmid">
    <name>IncP-beta R751</name>
</geneLocation>
<proteinExistence type="inferred from homology"/>
<sequence length="132" mass="14622">MPKTYPEELAEWVKGREAKKPRQDKHVVAFLAVKSDVQAALDAGYAMKTIWEHMKETGRLRCRYETFTQHVKRYIKAAPVASPPPPATPPDSQPKGAKPEPKAAPPASESKSEPPKIGGFTFDATPKKEDLL</sequence>
<organism>
    <name type="scientific">Escherichia coli</name>
    <dbReference type="NCBI Taxonomy" id="562"/>
    <lineage>
        <taxon>Bacteria</taxon>
        <taxon>Pseudomonadati</taxon>
        <taxon>Pseudomonadota</taxon>
        <taxon>Gammaproteobacteria</taxon>
        <taxon>Enterobacterales</taxon>
        <taxon>Enterobacteriaceae</taxon>
        <taxon>Escherichia</taxon>
    </lineage>
</organism>
<feature type="initiator methionine" description="Removed" evidence="1">
    <location>
        <position position="1"/>
    </location>
</feature>
<feature type="chain" id="PRO_0000068599" description="Protein TraK">
    <location>
        <begin position="2"/>
        <end position="132"/>
    </location>
</feature>
<feature type="region of interest" description="Disordered" evidence="2">
    <location>
        <begin position="76"/>
        <end position="132"/>
    </location>
</feature>
<feature type="compositionally biased region" description="Pro residues" evidence="2">
    <location>
        <begin position="81"/>
        <end position="92"/>
    </location>
</feature>
<evidence type="ECO:0000250" key="1"/>
<evidence type="ECO:0000256" key="2">
    <source>
        <dbReference type="SAM" id="MobiDB-lite"/>
    </source>
</evidence>
<name>TRAK5_ECOLX</name>
<protein>
    <recommendedName>
        <fullName>Protein TraK</fullName>
    </recommendedName>
</protein>
<gene>
    <name type="primary">traK</name>
</gene>
<keyword id="KW-0614">Plasmid</keyword>
<reference key="1">
    <citation type="journal article" date="1991" name="DNA Seq.">
        <title>Nucleotide sequence and organization of genes flanking the transfer origin of promiscuous plasmid RP4.</title>
        <authorList>
            <person name="Ziegelin G."/>
            <person name="Pansegrau W."/>
            <person name="Strack B."/>
            <person name="Balzer D."/>
            <person name="Kroeger M."/>
            <person name="Kruft V."/>
            <person name="Lanka E."/>
        </authorList>
    </citation>
    <scope>NUCLEOTIDE SEQUENCE [GENOMIC DNA]</scope>
    <source>
        <strain>ATCC 33694 / HB101</strain>
    </source>
</reference>
<reference key="2">
    <citation type="submission" date="1996-08" db="EMBL/GenBank/DDBJ databases">
        <authorList>
            <person name="Thomas C.M."/>
        </authorList>
    </citation>
    <scope>NUCLEOTIDE SEQUENCE [GENOMIC DNA]</scope>
</reference>
<reference key="3">
    <citation type="journal article" date="1989" name="Proc. Natl. Acad. Sci. U.S.A.">
        <title>Conjugative transfer of promiscuous IncP plasmids: interaction of plasmid-encoded products with the transfer origin.</title>
        <authorList>
            <person name="Fuerste J.P."/>
            <person name="Pansegrau W."/>
            <person name="Ziegelin G."/>
            <person name="Kroeger M."/>
            <person name="Lanka E."/>
        </authorList>
    </citation>
    <scope>NUCLEOTIDE SEQUENCE [GENOMIC DNA] OF 1-58</scope>
</reference>
<dbReference type="EMBL" id="X54458">
    <property type="protein sequence ID" value="CAA38332.1"/>
    <property type="molecule type" value="Genomic_DNA"/>
</dbReference>
<dbReference type="EMBL" id="U67194">
    <property type="protein sequence ID" value="AAC64479.1"/>
    <property type="molecule type" value="Genomic_DNA"/>
</dbReference>
<dbReference type="EMBL" id="M25422">
    <property type="protein sequence ID" value="AAA26086.1"/>
    <property type="molecule type" value="Genomic_DNA"/>
</dbReference>
<dbReference type="PIR" id="S22997">
    <property type="entry name" value="S22997"/>
</dbReference>
<dbReference type="RefSeq" id="WP_001127128.1">
    <property type="nucleotide sequence ID" value="NZ_JBEEEK010000035.1"/>
</dbReference>
<dbReference type="SMR" id="P17908"/>
<dbReference type="InterPro" id="IPR035225">
    <property type="entry name" value="DUF5338"/>
</dbReference>
<dbReference type="Pfam" id="PF17273">
    <property type="entry name" value="DUF5338"/>
    <property type="match status" value="1"/>
</dbReference>